<sequence>MSPSVLEIRGLRIETQAGVLVHDVDLQLRRGEVCTLVGASGSGKSLSCLGLLDLLPPGLARTQGQLLLDGQPLAASSVRGRLTSLVLQNPRSAFNPVRNMASHAIETLRQRGITSAVARARMAHCLDAVGLADTERVLQSFAFQLSGGMLQRMMIALALMAETPFLLADEPTSDLDALSQARFLDLLMELVQVHGLGVLLVTHDMGVVARCADQVAVMEAGRIVECQPAHELFQRPASATARTLLHAHQVLCRSQP</sequence>
<feature type="chain" id="PRO_0000092623" description="Nickel import ATP-binding protein NikD">
    <location>
        <begin position="1"/>
        <end position="256"/>
    </location>
</feature>
<feature type="domain" description="ABC transporter" evidence="1">
    <location>
        <begin position="6"/>
        <end position="245"/>
    </location>
</feature>
<feature type="binding site" evidence="1">
    <location>
        <begin position="38"/>
        <end position="45"/>
    </location>
    <ligand>
        <name>ATP</name>
        <dbReference type="ChEBI" id="CHEBI:30616"/>
    </ligand>
</feature>
<keyword id="KW-0067">ATP-binding</keyword>
<keyword id="KW-0997">Cell inner membrane</keyword>
<keyword id="KW-1003">Cell membrane</keyword>
<keyword id="KW-0406">Ion transport</keyword>
<keyword id="KW-0472">Membrane</keyword>
<keyword id="KW-0533">Nickel</keyword>
<keyword id="KW-0921">Nickel transport</keyword>
<keyword id="KW-0547">Nucleotide-binding</keyword>
<keyword id="KW-1185">Reference proteome</keyword>
<keyword id="KW-1278">Translocase</keyword>
<keyword id="KW-0813">Transport</keyword>
<reference key="1">
    <citation type="journal article" date="2002" name="Environ. Microbiol.">
        <title>Complete genome sequence and comparative analysis of the metabolically versatile Pseudomonas putida KT2440.</title>
        <authorList>
            <person name="Nelson K.E."/>
            <person name="Weinel C."/>
            <person name="Paulsen I.T."/>
            <person name="Dodson R.J."/>
            <person name="Hilbert H."/>
            <person name="Martins dos Santos V.A.P."/>
            <person name="Fouts D.E."/>
            <person name="Gill S.R."/>
            <person name="Pop M."/>
            <person name="Holmes M."/>
            <person name="Brinkac L.M."/>
            <person name="Beanan M.J."/>
            <person name="DeBoy R.T."/>
            <person name="Daugherty S.C."/>
            <person name="Kolonay J.F."/>
            <person name="Madupu R."/>
            <person name="Nelson W.C."/>
            <person name="White O."/>
            <person name="Peterson J.D."/>
            <person name="Khouri H.M."/>
            <person name="Hance I."/>
            <person name="Chris Lee P."/>
            <person name="Holtzapple E.K."/>
            <person name="Scanlan D."/>
            <person name="Tran K."/>
            <person name="Moazzez A."/>
            <person name="Utterback T.R."/>
            <person name="Rizzo M."/>
            <person name="Lee K."/>
            <person name="Kosack D."/>
            <person name="Moestl D."/>
            <person name="Wedler H."/>
            <person name="Lauber J."/>
            <person name="Stjepandic D."/>
            <person name="Hoheisel J."/>
            <person name="Straetz M."/>
            <person name="Heim S."/>
            <person name="Kiewitz C."/>
            <person name="Eisen J.A."/>
            <person name="Timmis K.N."/>
            <person name="Duesterhoeft A."/>
            <person name="Tuemmler B."/>
            <person name="Fraser C.M."/>
        </authorList>
    </citation>
    <scope>NUCLEOTIDE SEQUENCE [LARGE SCALE GENOMIC DNA]</scope>
    <source>
        <strain>ATCC 47054 / DSM 6125 / CFBP 8728 / NCIMB 11950 / KT2440</strain>
    </source>
</reference>
<name>NIKD_PSEPK</name>
<accession>Q88HL1</accession>
<comment type="function">
    <text evidence="1">Part of the ABC transporter complex NikABCDE involved in nickel import. Responsible for energy coupling to the transport system.</text>
</comment>
<comment type="catalytic activity">
    <reaction evidence="1">
        <text>Ni(2+)(out) + ATP + H2O = Ni(2+)(in) + ADP + phosphate + H(+)</text>
        <dbReference type="Rhea" id="RHEA:15557"/>
        <dbReference type="ChEBI" id="CHEBI:15377"/>
        <dbReference type="ChEBI" id="CHEBI:15378"/>
        <dbReference type="ChEBI" id="CHEBI:30616"/>
        <dbReference type="ChEBI" id="CHEBI:43474"/>
        <dbReference type="ChEBI" id="CHEBI:49786"/>
        <dbReference type="ChEBI" id="CHEBI:456216"/>
        <dbReference type="EC" id="7.2.2.11"/>
    </reaction>
</comment>
<comment type="subunit">
    <text evidence="1">The complex is composed of two ATP-binding proteins (NikD and NikE), two transmembrane proteins (NikB and NikC) and a solute-binding protein (NikA).</text>
</comment>
<comment type="subcellular location">
    <subcellularLocation>
        <location evidence="1">Cell inner membrane</location>
        <topology evidence="1">Peripheral membrane protein</topology>
    </subcellularLocation>
</comment>
<comment type="similarity">
    <text evidence="1">Belongs to the ABC transporter superfamily. Nickel importer (TC 3.A.1.5.3) family.</text>
</comment>
<protein>
    <recommendedName>
        <fullName evidence="1">Nickel import ATP-binding protein NikD</fullName>
        <ecNumber evidence="1">7.2.2.11</ecNumber>
    </recommendedName>
</protein>
<evidence type="ECO:0000255" key="1">
    <source>
        <dbReference type="HAMAP-Rule" id="MF_01711"/>
    </source>
</evidence>
<dbReference type="EC" id="7.2.2.11" evidence="1"/>
<dbReference type="EMBL" id="AE015451">
    <property type="protein sequence ID" value="AAN68949.1"/>
    <property type="molecule type" value="Genomic_DNA"/>
</dbReference>
<dbReference type="RefSeq" id="NP_745485.1">
    <property type="nucleotide sequence ID" value="NC_002947.4"/>
</dbReference>
<dbReference type="RefSeq" id="WP_010954221.1">
    <property type="nucleotide sequence ID" value="NZ_CP169744.1"/>
</dbReference>
<dbReference type="SMR" id="Q88HL1"/>
<dbReference type="STRING" id="160488.PP_3345"/>
<dbReference type="PaxDb" id="160488-PP_3345"/>
<dbReference type="GeneID" id="83679945"/>
<dbReference type="KEGG" id="ppu:PP_3345"/>
<dbReference type="PATRIC" id="fig|160488.4.peg.3557"/>
<dbReference type="eggNOG" id="COG0444">
    <property type="taxonomic scope" value="Bacteria"/>
</dbReference>
<dbReference type="HOGENOM" id="CLU_000604_1_23_6"/>
<dbReference type="OrthoDB" id="6849577at2"/>
<dbReference type="PhylomeDB" id="Q88HL1"/>
<dbReference type="BioCyc" id="PPUT160488:G1G01-3578-MONOMER"/>
<dbReference type="Proteomes" id="UP000000556">
    <property type="component" value="Chromosome"/>
</dbReference>
<dbReference type="GO" id="GO:0005886">
    <property type="term" value="C:plasma membrane"/>
    <property type="evidence" value="ECO:0007669"/>
    <property type="project" value="UniProtKB-SubCell"/>
</dbReference>
<dbReference type="GO" id="GO:0015413">
    <property type="term" value="F:ABC-type nickel transporter activity"/>
    <property type="evidence" value="ECO:0007669"/>
    <property type="project" value="UniProtKB-EC"/>
</dbReference>
<dbReference type="GO" id="GO:0005524">
    <property type="term" value="F:ATP binding"/>
    <property type="evidence" value="ECO:0007669"/>
    <property type="project" value="UniProtKB-KW"/>
</dbReference>
<dbReference type="GO" id="GO:0016887">
    <property type="term" value="F:ATP hydrolysis activity"/>
    <property type="evidence" value="ECO:0007669"/>
    <property type="project" value="InterPro"/>
</dbReference>
<dbReference type="GO" id="GO:0016151">
    <property type="term" value="F:nickel cation binding"/>
    <property type="evidence" value="ECO:0007669"/>
    <property type="project" value="InterPro"/>
</dbReference>
<dbReference type="CDD" id="cd03257">
    <property type="entry name" value="ABC_NikE_OppD_transporters"/>
    <property type="match status" value="1"/>
</dbReference>
<dbReference type="Gene3D" id="3.40.50.300">
    <property type="entry name" value="P-loop containing nucleotide triphosphate hydrolases"/>
    <property type="match status" value="1"/>
</dbReference>
<dbReference type="InterPro" id="IPR003593">
    <property type="entry name" value="AAA+_ATPase"/>
</dbReference>
<dbReference type="InterPro" id="IPR050388">
    <property type="entry name" value="ABC_Ni/Peptide_Import"/>
</dbReference>
<dbReference type="InterPro" id="IPR003439">
    <property type="entry name" value="ABC_transporter-like_ATP-bd"/>
</dbReference>
<dbReference type="InterPro" id="IPR017871">
    <property type="entry name" value="ABC_transporter-like_CS"/>
</dbReference>
<dbReference type="InterPro" id="IPR014138">
    <property type="entry name" value="Nickel_NikD"/>
</dbReference>
<dbReference type="InterPro" id="IPR027417">
    <property type="entry name" value="P-loop_NTPase"/>
</dbReference>
<dbReference type="NCBIfam" id="TIGR02770">
    <property type="entry name" value="nickel_nikD"/>
    <property type="match status" value="1"/>
</dbReference>
<dbReference type="PANTHER" id="PTHR43297:SF14">
    <property type="entry name" value="ATPASE AAA-TYPE CORE DOMAIN-CONTAINING PROTEIN"/>
    <property type="match status" value="1"/>
</dbReference>
<dbReference type="PANTHER" id="PTHR43297">
    <property type="entry name" value="OLIGOPEPTIDE TRANSPORT ATP-BINDING PROTEIN APPD"/>
    <property type="match status" value="1"/>
</dbReference>
<dbReference type="Pfam" id="PF00005">
    <property type="entry name" value="ABC_tran"/>
    <property type="match status" value="1"/>
</dbReference>
<dbReference type="SMART" id="SM00382">
    <property type="entry name" value="AAA"/>
    <property type="match status" value="1"/>
</dbReference>
<dbReference type="SUPFAM" id="SSF52540">
    <property type="entry name" value="P-loop containing nucleoside triphosphate hydrolases"/>
    <property type="match status" value="1"/>
</dbReference>
<dbReference type="PROSITE" id="PS00211">
    <property type="entry name" value="ABC_TRANSPORTER_1"/>
    <property type="match status" value="1"/>
</dbReference>
<dbReference type="PROSITE" id="PS50893">
    <property type="entry name" value="ABC_TRANSPORTER_2"/>
    <property type="match status" value="1"/>
</dbReference>
<dbReference type="PROSITE" id="PS51247">
    <property type="entry name" value="NIKD"/>
    <property type="match status" value="1"/>
</dbReference>
<proteinExistence type="inferred from homology"/>
<organism>
    <name type="scientific">Pseudomonas putida (strain ATCC 47054 / DSM 6125 / CFBP 8728 / NCIMB 11950 / KT2440)</name>
    <dbReference type="NCBI Taxonomy" id="160488"/>
    <lineage>
        <taxon>Bacteria</taxon>
        <taxon>Pseudomonadati</taxon>
        <taxon>Pseudomonadota</taxon>
        <taxon>Gammaproteobacteria</taxon>
        <taxon>Pseudomonadales</taxon>
        <taxon>Pseudomonadaceae</taxon>
        <taxon>Pseudomonas</taxon>
    </lineage>
</organism>
<gene>
    <name evidence="1" type="primary">nikD</name>
    <name type="ordered locus">PP_3345</name>
</gene>